<evidence type="ECO:0000255" key="1">
    <source>
        <dbReference type="HAMAP-Rule" id="MF_00214"/>
    </source>
</evidence>
<proteinExistence type="inferred from homology"/>
<comment type="function">
    <text evidence="1">Involved in the third step of the chorismate pathway, which leads to the biosynthesis of aromatic amino acids. Catalyzes the cis-dehydration of 3-dehydroquinate (DHQ) and introduces the first double bond of the aromatic ring to yield 3-dehydroshikimate.</text>
</comment>
<comment type="catalytic activity">
    <reaction evidence="1">
        <text>3-dehydroquinate = 3-dehydroshikimate + H2O</text>
        <dbReference type="Rhea" id="RHEA:21096"/>
        <dbReference type="ChEBI" id="CHEBI:15377"/>
        <dbReference type="ChEBI" id="CHEBI:16630"/>
        <dbReference type="ChEBI" id="CHEBI:32364"/>
        <dbReference type="EC" id="4.2.1.10"/>
    </reaction>
</comment>
<comment type="pathway">
    <text evidence="1">Metabolic intermediate biosynthesis; chorismate biosynthesis; chorismate from D-erythrose 4-phosphate and phosphoenolpyruvate: step 3/7.</text>
</comment>
<comment type="subunit">
    <text evidence="1">Homodimer.</text>
</comment>
<comment type="similarity">
    <text evidence="1">Belongs to the type-I 3-dehydroquinase family.</text>
</comment>
<feature type="chain" id="PRO_1000043173" description="3-dehydroquinate dehydratase">
    <location>
        <begin position="1"/>
        <end position="218"/>
    </location>
</feature>
<feature type="active site" description="Proton donor/acceptor" evidence="1">
    <location>
        <position position="116"/>
    </location>
</feature>
<feature type="active site" description="Schiff-base intermediate with substrate" evidence="1">
    <location>
        <position position="142"/>
    </location>
</feature>
<feature type="binding site" evidence="1">
    <location>
        <begin position="29"/>
        <end position="31"/>
    </location>
    <ligand>
        <name>3-dehydroquinate</name>
        <dbReference type="ChEBI" id="CHEBI:32364"/>
    </ligand>
</feature>
<feature type="binding site" evidence="1">
    <location>
        <position position="56"/>
    </location>
    <ligand>
        <name>3-dehydroquinate</name>
        <dbReference type="ChEBI" id="CHEBI:32364"/>
    </ligand>
</feature>
<feature type="binding site" evidence="1">
    <location>
        <position position="180"/>
    </location>
    <ligand>
        <name>3-dehydroquinate</name>
        <dbReference type="ChEBI" id="CHEBI:32364"/>
    </ligand>
</feature>
<feature type="binding site" evidence="1">
    <location>
        <position position="200"/>
    </location>
    <ligand>
        <name>3-dehydroquinate</name>
        <dbReference type="ChEBI" id="CHEBI:32364"/>
    </ligand>
</feature>
<feature type="binding site" evidence="1">
    <location>
        <position position="204"/>
    </location>
    <ligand>
        <name>3-dehydroquinate</name>
        <dbReference type="ChEBI" id="CHEBI:32364"/>
    </ligand>
</feature>
<dbReference type="EC" id="4.2.1.10" evidence="1"/>
<dbReference type="EMBL" id="CP000609">
    <property type="protein sequence ID" value="ABO34501.1"/>
    <property type="molecule type" value="Genomic_DNA"/>
</dbReference>
<dbReference type="RefSeq" id="WP_011867959.1">
    <property type="nucleotide sequence ID" value="NC_009135.1"/>
</dbReference>
<dbReference type="SMR" id="A4FWC6"/>
<dbReference type="STRING" id="402880.MmarC5_0184"/>
<dbReference type="GeneID" id="4928615"/>
<dbReference type="KEGG" id="mmq:MmarC5_0184"/>
<dbReference type="eggNOG" id="arCOG02097">
    <property type="taxonomic scope" value="Archaea"/>
</dbReference>
<dbReference type="HOGENOM" id="CLU_064444_2_1_2"/>
<dbReference type="OrthoDB" id="34329at2157"/>
<dbReference type="UniPathway" id="UPA00053">
    <property type="reaction ID" value="UER00086"/>
</dbReference>
<dbReference type="Proteomes" id="UP000000253">
    <property type="component" value="Chromosome"/>
</dbReference>
<dbReference type="GO" id="GO:0003855">
    <property type="term" value="F:3-dehydroquinate dehydratase activity"/>
    <property type="evidence" value="ECO:0007669"/>
    <property type="project" value="UniProtKB-UniRule"/>
</dbReference>
<dbReference type="GO" id="GO:0046279">
    <property type="term" value="P:3,4-dihydroxybenzoate biosynthetic process"/>
    <property type="evidence" value="ECO:0007669"/>
    <property type="project" value="TreeGrafter"/>
</dbReference>
<dbReference type="GO" id="GO:0008652">
    <property type="term" value="P:amino acid biosynthetic process"/>
    <property type="evidence" value="ECO:0007669"/>
    <property type="project" value="UniProtKB-KW"/>
</dbReference>
<dbReference type="GO" id="GO:0009073">
    <property type="term" value="P:aromatic amino acid family biosynthetic process"/>
    <property type="evidence" value="ECO:0007669"/>
    <property type="project" value="UniProtKB-KW"/>
</dbReference>
<dbReference type="GO" id="GO:0009423">
    <property type="term" value="P:chorismate biosynthetic process"/>
    <property type="evidence" value="ECO:0007669"/>
    <property type="project" value="UniProtKB-UniRule"/>
</dbReference>
<dbReference type="CDD" id="cd00502">
    <property type="entry name" value="DHQase_I"/>
    <property type="match status" value="1"/>
</dbReference>
<dbReference type="FunFam" id="3.20.20.70:FF:000047">
    <property type="entry name" value="3-dehydroquinate dehydratase"/>
    <property type="match status" value="1"/>
</dbReference>
<dbReference type="Gene3D" id="3.20.20.70">
    <property type="entry name" value="Aldolase class I"/>
    <property type="match status" value="1"/>
</dbReference>
<dbReference type="HAMAP" id="MF_00214">
    <property type="entry name" value="AroD"/>
    <property type="match status" value="1"/>
</dbReference>
<dbReference type="InterPro" id="IPR018508">
    <property type="entry name" value="3-dehydroquinate_DH_AS"/>
</dbReference>
<dbReference type="InterPro" id="IPR013785">
    <property type="entry name" value="Aldolase_TIM"/>
</dbReference>
<dbReference type="InterPro" id="IPR001381">
    <property type="entry name" value="DHquinase_I"/>
</dbReference>
<dbReference type="InterPro" id="IPR050146">
    <property type="entry name" value="Type-I_3-dehydroquinase"/>
</dbReference>
<dbReference type="NCBIfam" id="TIGR01093">
    <property type="entry name" value="aroD"/>
    <property type="match status" value="1"/>
</dbReference>
<dbReference type="PANTHER" id="PTHR43699">
    <property type="entry name" value="3-DEHYDROQUINATE DEHYDRATASE"/>
    <property type="match status" value="1"/>
</dbReference>
<dbReference type="PANTHER" id="PTHR43699:SF1">
    <property type="entry name" value="3-DEHYDROQUINATE DEHYDRATASE"/>
    <property type="match status" value="1"/>
</dbReference>
<dbReference type="Pfam" id="PF01487">
    <property type="entry name" value="DHquinase_I"/>
    <property type="match status" value="1"/>
</dbReference>
<dbReference type="SUPFAM" id="SSF51569">
    <property type="entry name" value="Aldolase"/>
    <property type="match status" value="1"/>
</dbReference>
<dbReference type="PROSITE" id="PS01028">
    <property type="entry name" value="DEHYDROQUINASE_I"/>
    <property type="match status" value="1"/>
</dbReference>
<gene>
    <name evidence="1" type="primary">aroD</name>
    <name type="ordered locus">MmarC5_0184</name>
</gene>
<organism>
    <name type="scientific">Methanococcus maripaludis (strain C5 / ATCC BAA-1333)</name>
    <dbReference type="NCBI Taxonomy" id="402880"/>
    <lineage>
        <taxon>Archaea</taxon>
        <taxon>Methanobacteriati</taxon>
        <taxon>Methanobacteriota</taxon>
        <taxon>Methanomada group</taxon>
        <taxon>Methanococci</taxon>
        <taxon>Methanococcales</taxon>
        <taxon>Methanococcaceae</taxon>
        <taxon>Methanococcus</taxon>
    </lineage>
</organism>
<protein>
    <recommendedName>
        <fullName evidence="1">3-dehydroquinate dehydratase</fullName>
        <shortName evidence="1">3-dehydroquinase</shortName>
        <ecNumber evidence="1">4.2.1.10</ecNumber>
    </recommendedName>
    <alternativeName>
        <fullName evidence="1">Type I DHQase</fullName>
    </alternativeName>
    <alternativeName>
        <fullName evidence="1">Type I dehydroquinase</fullName>
        <shortName evidence="1">DHQ1</shortName>
    </alternativeName>
</protein>
<name>AROD_METM5</name>
<keyword id="KW-0028">Amino-acid biosynthesis</keyword>
<keyword id="KW-0057">Aromatic amino acid biosynthesis</keyword>
<keyword id="KW-0456">Lyase</keyword>
<keyword id="KW-0704">Schiff base</keyword>
<reference key="1">
    <citation type="submission" date="2007-03" db="EMBL/GenBank/DDBJ databases">
        <title>Complete sequence of chromosome of Methanococcus maripaludis C5.</title>
        <authorList>
            <consortium name="US DOE Joint Genome Institute"/>
            <person name="Copeland A."/>
            <person name="Lucas S."/>
            <person name="Lapidus A."/>
            <person name="Barry K."/>
            <person name="Glavina del Rio T."/>
            <person name="Dalin E."/>
            <person name="Tice H."/>
            <person name="Pitluck S."/>
            <person name="Chertkov O."/>
            <person name="Brettin T."/>
            <person name="Bruce D."/>
            <person name="Han C."/>
            <person name="Detter J.C."/>
            <person name="Schmutz J."/>
            <person name="Larimer F."/>
            <person name="Land M."/>
            <person name="Hauser L."/>
            <person name="Kyrpides N."/>
            <person name="Mikhailova N."/>
            <person name="Sieprawska-Lupa M."/>
            <person name="Whitman W.B."/>
            <person name="Richardson P."/>
        </authorList>
    </citation>
    <scope>NUCLEOTIDE SEQUENCE [LARGE SCALE GENOMIC DNA]</scope>
    <source>
        <strain>C5 / ATCC BAA-1333</strain>
    </source>
</reference>
<accession>A4FWC6</accession>
<sequence length="218" mass="24717">MICIPVIDEDMSDAINSAKEALKYGDIVEFRVDLLNNVTFEDITEFSKIPSIITIRAEWEGGAWKKSNEERIELLKHAIKNNAKFVDIELKEEKNLELVKYRNEIRSNTKIIVSYHDFEKTPEIDELIDVVEKELKIGDIAKFATFANSKEDTLKILNLMNKYYGKIIAIGMGESGKLTRILGLDFGSILTFASMEGKASAPGQVDVKKLKEILELIE</sequence>